<proteinExistence type="inferred from homology"/>
<comment type="catalytic activity">
    <reaction evidence="1">
        <text>5-amino-1-(5-phospho-D-ribosyl)imidazole-4-carboxylate + L-aspartate + ATP = (2S)-2-[5-amino-1-(5-phospho-beta-D-ribosyl)imidazole-4-carboxamido]succinate + ADP + phosphate + 2 H(+)</text>
        <dbReference type="Rhea" id="RHEA:22628"/>
        <dbReference type="ChEBI" id="CHEBI:15378"/>
        <dbReference type="ChEBI" id="CHEBI:29991"/>
        <dbReference type="ChEBI" id="CHEBI:30616"/>
        <dbReference type="ChEBI" id="CHEBI:43474"/>
        <dbReference type="ChEBI" id="CHEBI:58443"/>
        <dbReference type="ChEBI" id="CHEBI:77657"/>
        <dbReference type="ChEBI" id="CHEBI:456216"/>
        <dbReference type="EC" id="6.3.2.6"/>
    </reaction>
</comment>
<comment type="pathway">
    <text evidence="1">Purine metabolism; IMP biosynthesis via de novo pathway; 5-amino-1-(5-phospho-D-ribosyl)imidazole-4-carboxamide from 5-amino-1-(5-phospho-D-ribosyl)imidazole-4-carboxylate: step 1/2.</text>
</comment>
<comment type="similarity">
    <text evidence="1">Belongs to the SAICAR synthetase family.</text>
</comment>
<reference key="1">
    <citation type="journal article" date="2002" name="Proc. Natl. Acad. Sci. U.S.A.">
        <title>Genome sequence of the hyperthermophilic crenarchaeon Pyrobaculum aerophilum.</title>
        <authorList>
            <person name="Fitz-Gibbon S.T."/>
            <person name="Ladner H."/>
            <person name="Kim U.-J."/>
            <person name="Stetter K.O."/>
            <person name="Simon M.I."/>
            <person name="Miller J.H."/>
        </authorList>
    </citation>
    <scope>NUCLEOTIDE SEQUENCE [LARGE SCALE GENOMIC DNA]</scope>
    <source>
        <strain>ATCC 51768 / DSM 7523 / JCM 9630 / CIP 104966 / NBRC 100827 / IM2</strain>
    </source>
</reference>
<accession>Q8ZZK5</accession>
<protein>
    <recommendedName>
        <fullName evidence="1">Phosphoribosylaminoimidazole-succinocarboxamide synthase</fullName>
        <ecNumber evidence="1">6.3.2.6</ecNumber>
    </recommendedName>
    <alternativeName>
        <fullName evidence="1">SAICAR synthetase</fullName>
    </alternativeName>
</protein>
<dbReference type="EC" id="6.3.2.6" evidence="1"/>
<dbReference type="EMBL" id="AE009441">
    <property type="protein sequence ID" value="AAL62634.1"/>
    <property type="molecule type" value="Genomic_DNA"/>
</dbReference>
<dbReference type="RefSeq" id="WP_011007106.1">
    <property type="nucleotide sequence ID" value="NC_003364.1"/>
</dbReference>
<dbReference type="SMR" id="Q8ZZK5"/>
<dbReference type="FunCoup" id="Q8ZZK5">
    <property type="interactions" value="220"/>
</dbReference>
<dbReference type="STRING" id="178306.PAE0215"/>
<dbReference type="EnsemblBacteria" id="AAL62634">
    <property type="protein sequence ID" value="AAL62634"/>
    <property type="gene ID" value="PAE0215"/>
</dbReference>
<dbReference type="GeneID" id="1464852"/>
<dbReference type="KEGG" id="pai:PAE0215"/>
<dbReference type="PATRIC" id="fig|178306.9.peg.156"/>
<dbReference type="eggNOG" id="arCOG04421">
    <property type="taxonomic scope" value="Archaea"/>
</dbReference>
<dbReference type="HOGENOM" id="CLU_061495_0_0_2"/>
<dbReference type="InParanoid" id="Q8ZZK5"/>
<dbReference type="UniPathway" id="UPA00074">
    <property type="reaction ID" value="UER00131"/>
</dbReference>
<dbReference type="Proteomes" id="UP000002439">
    <property type="component" value="Chromosome"/>
</dbReference>
<dbReference type="GO" id="GO:0005524">
    <property type="term" value="F:ATP binding"/>
    <property type="evidence" value="ECO:0007669"/>
    <property type="project" value="UniProtKB-KW"/>
</dbReference>
<dbReference type="GO" id="GO:0004639">
    <property type="term" value="F:phosphoribosylaminoimidazolesuccinocarboxamide synthase activity"/>
    <property type="evidence" value="ECO:0007669"/>
    <property type="project" value="UniProtKB-UniRule"/>
</dbReference>
<dbReference type="GO" id="GO:0006189">
    <property type="term" value="P:'de novo' IMP biosynthetic process"/>
    <property type="evidence" value="ECO:0007669"/>
    <property type="project" value="UniProtKB-UniRule"/>
</dbReference>
<dbReference type="GO" id="GO:0009236">
    <property type="term" value="P:cobalamin biosynthetic process"/>
    <property type="evidence" value="ECO:0007669"/>
    <property type="project" value="InterPro"/>
</dbReference>
<dbReference type="CDD" id="cd01415">
    <property type="entry name" value="SAICAR_synt_PurC"/>
    <property type="match status" value="1"/>
</dbReference>
<dbReference type="FunFam" id="3.30.200.20:FF:000865">
    <property type="entry name" value="Phosphoribosylaminoimidazole-succinocarboxamide synthase"/>
    <property type="match status" value="1"/>
</dbReference>
<dbReference type="FunFam" id="3.30.470.20:FF:000020">
    <property type="entry name" value="Probable multifunctional protein ADE2"/>
    <property type="match status" value="1"/>
</dbReference>
<dbReference type="Gene3D" id="3.30.470.20">
    <property type="entry name" value="ATP-grasp fold, B domain"/>
    <property type="match status" value="1"/>
</dbReference>
<dbReference type="Gene3D" id="3.30.200.20">
    <property type="entry name" value="Phosphorylase Kinase, domain 1"/>
    <property type="match status" value="1"/>
</dbReference>
<dbReference type="HAMAP" id="MF_00137">
    <property type="entry name" value="SAICAR_synth"/>
    <property type="match status" value="1"/>
</dbReference>
<dbReference type="InterPro" id="IPR028923">
    <property type="entry name" value="SAICAR_synt/ADE2_N"/>
</dbReference>
<dbReference type="InterPro" id="IPR033934">
    <property type="entry name" value="SAICAR_synt_PurC"/>
</dbReference>
<dbReference type="InterPro" id="IPR050089">
    <property type="entry name" value="SAICAR_synthetase"/>
</dbReference>
<dbReference type="InterPro" id="IPR018236">
    <property type="entry name" value="SAICAR_synthetase_CS"/>
</dbReference>
<dbReference type="PANTHER" id="PTHR43599">
    <property type="entry name" value="MULTIFUNCTIONAL PROTEIN ADE2"/>
    <property type="match status" value="1"/>
</dbReference>
<dbReference type="PANTHER" id="PTHR43599:SF3">
    <property type="entry name" value="SI:DKEY-6E2.2"/>
    <property type="match status" value="1"/>
</dbReference>
<dbReference type="Pfam" id="PF01259">
    <property type="entry name" value="SAICAR_synt"/>
    <property type="match status" value="1"/>
</dbReference>
<dbReference type="SUPFAM" id="SSF56104">
    <property type="entry name" value="SAICAR synthase-like"/>
    <property type="match status" value="1"/>
</dbReference>
<dbReference type="PROSITE" id="PS01057">
    <property type="entry name" value="SAICAR_SYNTHETASE_1"/>
    <property type="match status" value="1"/>
</dbReference>
<feature type="chain" id="PRO_0000100914" description="Phosphoribosylaminoimidazole-succinocarboxamide synthase">
    <location>
        <begin position="1"/>
        <end position="234"/>
    </location>
</feature>
<keyword id="KW-0067">ATP-binding</keyword>
<keyword id="KW-0436">Ligase</keyword>
<keyword id="KW-0547">Nucleotide-binding</keyword>
<keyword id="KW-0658">Purine biosynthesis</keyword>
<keyword id="KW-1185">Reference proteome</keyword>
<evidence type="ECO:0000255" key="1">
    <source>
        <dbReference type="HAMAP-Rule" id="MF_00137"/>
    </source>
</evidence>
<sequence>MELVYEGKAKRVYKHGDFYIMEFKDEVTAGDGAVKAQAPGKGALTAELSALLFKYLSRVVETHFVEYKPPNALAVIPAEVIPVEVIVRFKAYGSQLRRMPRLRELQHLSRPLVEFHYKDDALHDPLVYPQEVVEAGLAAPQEVEAIEEMAVRAASALRDLYARAGCDFIDVKFEFGRRGGRLILVDEVSGDTFRLLCRGEHLDKEYFRKTKDVNGLIERYRDLLQITKETFTRI</sequence>
<name>PUR7_PYRAE</name>
<organism>
    <name type="scientific">Pyrobaculum aerophilum (strain ATCC 51768 / DSM 7523 / JCM 9630 / CIP 104966 / NBRC 100827 / IM2)</name>
    <dbReference type="NCBI Taxonomy" id="178306"/>
    <lineage>
        <taxon>Archaea</taxon>
        <taxon>Thermoproteota</taxon>
        <taxon>Thermoprotei</taxon>
        <taxon>Thermoproteales</taxon>
        <taxon>Thermoproteaceae</taxon>
        <taxon>Pyrobaculum</taxon>
    </lineage>
</organism>
<gene>
    <name evidence="1" type="primary">purC</name>
    <name type="ordered locus">PAE0215</name>
</gene>